<sequence>MRRLWGPGTPFLALLLLVSIKQVTTGSLLEETVQKWAQYKETCLKDLLEKPSGVFCNGTFDKYVCWPHSFPGNVSVPCPSYLPWWNKESPGRAYRHCLAQGTWQKQENSTDTWQDESECSENHSFKQNVDHYHHTLLSTLQLMYTVGYSLSLISLFLALTLFLFLRKLHCTRNYIHMNLFASFILRALVVLVKDMVFYNSYSRRPDSESGWMSYLSEISASCRSVQVLLHYFVGTNHLWLLVEGLYLHALLEPTVLPERRLWPKYLVVGWAFPMLFVIPWIFVRASLENTGCWAVNENKKIWWIIRGPILLCVTVNFFIFLKILKLLISKFRAHQMCFRDYKYRLAKSTLLLILLMGVHEFLFTFFTDDQVQGFSRLIRLFIQLTLSSFHGFLVALQYGFASREVKAELRKTWGRFLLARHWGCRACVLGKNFRFLGKCSKKLSEGDGAETLQKLQSSGVSSHLTAGNLRDHGAQPHRGRGAWPRASSLSESSEGDFTLANTMEEILEESEI</sequence>
<proteinExistence type="evidence at transcript level"/>
<gene>
    <name type="primary">Glp2r</name>
</gene>
<dbReference type="EMBL" id="AY605231">
    <property type="protein sequence ID" value="AAT46060.1"/>
    <property type="molecule type" value="mRNA"/>
</dbReference>
<dbReference type="EMBL" id="AL646097">
    <property type="status" value="NOT_ANNOTATED_CDS"/>
    <property type="molecule type" value="Genomic_DNA"/>
</dbReference>
<dbReference type="CCDS" id="CCDS24860.1"/>
<dbReference type="RefSeq" id="NP_783612.2">
    <property type="nucleotide sequence ID" value="NM_175681.3"/>
</dbReference>
<dbReference type="SMR" id="Q5IXF8"/>
<dbReference type="CORUM" id="Q5IXF8"/>
<dbReference type="FunCoup" id="Q5IXF8">
    <property type="interactions" value="1031"/>
</dbReference>
<dbReference type="STRING" id="10090.ENSMUSP00000061560"/>
<dbReference type="GlyCosmos" id="Q5IXF8">
    <property type="glycosylation" value="1 site, No reported glycans"/>
</dbReference>
<dbReference type="GlyGen" id="Q5IXF8">
    <property type="glycosylation" value="1 site"/>
</dbReference>
<dbReference type="PhosphoSitePlus" id="Q5IXF8"/>
<dbReference type="PaxDb" id="10090-ENSMUSP00000061560"/>
<dbReference type="ProteomicsDB" id="263368"/>
<dbReference type="Antibodypedia" id="12679">
    <property type="antibodies" value="378 antibodies from 34 providers"/>
</dbReference>
<dbReference type="DNASU" id="93896"/>
<dbReference type="Ensembl" id="ENSMUST00000051765.9">
    <property type="protein sequence ID" value="ENSMUSP00000061560.9"/>
    <property type="gene ID" value="ENSMUSG00000049928.16"/>
</dbReference>
<dbReference type="GeneID" id="93896"/>
<dbReference type="KEGG" id="mmu:93896"/>
<dbReference type="UCSC" id="uc007jna.1">
    <property type="organism name" value="mouse"/>
</dbReference>
<dbReference type="AGR" id="MGI:2136733"/>
<dbReference type="CTD" id="9340"/>
<dbReference type="MGI" id="MGI:2136733">
    <property type="gene designation" value="Glp2r"/>
</dbReference>
<dbReference type="VEuPathDB" id="HostDB:ENSMUSG00000049928"/>
<dbReference type="eggNOG" id="KOG4564">
    <property type="taxonomic scope" value="Eukaryota"/>
</dbReference>
<dbReference type="GeneTree" id="ENSGT00940000158127"/>
<dbReference type="HOGENOM" id="CLU_002753_4_0_1"/>
<dbReference type="InParanoid" id="Q5IXF8"/>
<dbReference type="OMA" id="SGVFCNG"/>
<dbReference type="OrthoDB" id="5967113at2759"/>
<dbReference type="PhylomeDB" id="Q5IXF8"/>
<dbReference type="TreeFam" id="TF315710"/>
<dbReference type="Reactome" id="R-MMU-418555">
    <property type="pathway name" value="G alpha (s) signalling events"/>
</dbReference>
<dbReference type="Reactome" id="R-MMU-420092">
    <property type="pathway name" value="Glucagon-type ligand receptors"/>
</dbReference>
<dbReference type="BioGRID-ORCS" id="93896">
    <property type="hits" value="2 hits in 78 CRISPR screens"/>
</dbReference>
<dbReference type="ChiTaRS" id="Glp2r">
    <property type="organism name" value="mouse"/>
</dbReference>
<dbReference type="PRO" id="PR:Q5IXF8"/>
<dbReference type="Proteomes" id="UP000000589">
    <property type="component" value="Chromosome 11"/>
</dbReference>
<dbReference type="RNAct" id="Q5IXF8">
    <property type="molecule type" value="protein"/>
</dbReference>
<dbReference type="Bgee" id="ENSMUSG00000049928">
    <property type="expression patterns" value="Expressed in retinal neural layer and 23 other cell types or tissues"/>
</dbReference>
<dbReference type="ExpressionAtlas" id="Q5IXF8">
    <property type="expression patterns" value="baseline and differential"/>
</dbReference>
<dbReference type="GO" id="GO:0005886">
    <property type="term" value="C:plasma membrane"/>
    <property type="evidence" value="ECO:0007669"/>
    <property type="project" value="UniProtKB-SubCell"/>
</dbReference>
<dbReference type="GO" id="GO:0004967">
    <property type="term" value="F:glucagon receptor activity"/>
    <property type="evidence" value="ECO:0007669"/>
    <property type="project" value="Ensembl"/>
</dbReference>
<dbReference type="GO" id="GO:0007188">
    <property type="term" value="P:adenylate cyclase-modulating G protein-coupled receptor signaling pathway"/>
    <property type="evidence" value="ECO:0007669"/>
    <property type="project" value="Ensembl"/>
</dbReference>
<dbReference type="GO" id="GO:0007166">
    <property type="term" value="P:cell surface receptor signaling pathway"/>
    <property type="evidence" value="ECO:0007669"/>
    <property type="project" value="InterPro"/>
</dbReference>
<dbReference type="CDD" id="cd15266">
    <property type="entry name" value="7tmB1_GLP2R"/>
    <property type="match status" value="1"/>
</dbReference>
<dbReference type="FunFam" id="1.20.1070.10:FF:000196">
    <property type="entry name" value="Glucagon like peptide 2 receptor"/>
    <property type="match status" value="1"/>
</dbReference>
<dbReference type="FunFam" id="4.10.1240.10:FF:000017">
    <property type="entry name" value="Glucagon like peptide 2 receptor"/>
    <property type="match status" value="1"/>
</dbReference>
<dbReference type="Gene3D" id="4.10.1240.10">
    <property type="entry name" value="GPCR, family 2, extracellular hormone receptor domain"/>
    <property type="match status" value="1"/>
</dbReference>
<dbReference type="Gene3D" id="1.20.1070.10">
    <property type="entry name" value="Rhodopsin 7-helix transmembrane proteins"/>
    <property type="match status" value="1"/>
</dbReference>
<dbReference type="InterPro" id="IPR039125">
    <property type="entry name" value="7tmB1_GLP2R"/>
</dbReference>
<dbReference type="InterPro" id="IPR050332">
    <property type="entry name" value="GPCR_2"/>
</dbReference>
<dbReference type="InterPro" id="IPR017981">
    <property type="entry name" value="GPCR_2-like_7TM"/>
</dbReference>
<dbReference type="InterPro" id="IPR036445">
    <property type="entry name" value="GPCR_2_extracell_dom_sf"/>
</dbReference>
<dbReference type="InterPro" id="IPR001879">
    <property type="entry name" value="GPCR_2_extracellular_dom"/>
</dbReference>
<dbReference type="InterPro" id="IPR000832">
    <property type="entry name" value="GPCR_2_secretin-like"/>
</dbReference>
<dbReference type="InterPro" id="IPR017983">
    <property type="entry name" value="GPCR_2_secretin-like_CS"/>
</dbReference>
<dbReference type="PANTHER" id="PTHR45620:SF23">
    <property type="entry name" value="GLUCAGON-LIKE PEPTIDE 2 RECEPTOR"/>
    <property type="match status" value="1"/>
</dbReference>
<dbReference type="PANTHER" id="PTHR45620">
    <property type="entry name" value="PDF RECEPTOR-LIKE PROTEIN-RELATED"/>
    <property type="match status" value="1"/>
</dbReference>
<dbReference type="Pfam" id="PF00002">
    <property type="entry name" value="7tm_2"/>
    <property type="match status" value="1"/>
</dbReference>
<dbReference type="Pfam" id="PF02793">
    <property type="entry name" value="HRM"/>
    <property type="match status" value="1"/>
</dbReference>
<dbReference type="PRINTS" id="PR00249">
    <property type="entry name" value="GPCRSECRETIN"/>
</dbReference>
<dbReference type="SMART" id="SM00008">
    <property type="entry name" value="HormR"/>
    <property type="match status" value="1"/>
</dbReference>
<dbReference type="SUPFAM" id="SSF81321">
    <property type="entry name" value="Family A G protein-coupled receptor-like"/>
    <property type="match status" value="1"/>
</dbReference>
<dbReference type="SUPFAM" id="SSF111418">
    <property type="entry name" value="Hormone receptor domain"/>
    <property type="match status" value="1"/>
</dbReference>
<dbReference type="PROSITE" id="PS00649">
    <property type="entry name" value="G_PROTEIN_RECEP_F2_1"/>
    <property type="match status" value="1"/>
</dbReference>
<dbReference type="PROSITE" id="PS50227">
    <property type="entry name" value="G_PROTEIN_RECEP_F2_3"/>
    <property type="match status" value="1"/>
</dbReference>
<dbReference type="PROSITE" id="PS50261">
    <property type="entry name" value="G_PROTEIN_RECEP_F2_4"/>
    <property type="match status" value="1"/>
</dbReference>
<keyword id="KW-1003">Cell membrane</keyword>
<keyword id="KW-1015">Disulfide bond</keyword>
<keyword id="KW-0297">G-protein coupled receptor</keyword>
<keyword id="KW-0325">Glycoprotein</keyword>
<keyword id="KW-0472">Membrane</keyword>
<keyword id="KW-0675">Receptor</keyword>
<keyword id="KW-1185">Reference proteome</keyword>
<keyword id="KW-0807">Transducer</keyword>
<keyword id="KW-0812">Transmembrane</keyword>
<keyword id="KW-1133">Transmembrane helix</keyword>
<feature type="chain" id="PRO_0000307111" description="Glucagon-like peptide 2 receptor">
    <location>
        <begin position="1"/>
        <end position="512"/>
    </location>
</feature>
<feature type="topological domain" description="Extracellular" evidence="1">
    <location>
        <begin position="1"/>
        <end position="135"/>
    </location>
</feature>
<feature type="transmembrane region" description="Helical; Name=1" evidence="1">
    <location>
        <begin position="136"/>
        <end position="160"/>
    </location>
</feature>
<feature type="topological domain" description="Cytoplasmic" evidence="1">
    <location>
        <begin position="161"/>
        <end position="172"/>
    </location>
</feature>
<feature type="transmembrane region" description="Helical; Name=2" evidence="1">
    <location>
        <begin position="173"/>
        <end position="197"/>
    </location>
</feature>
<feature type="topological domain" description="Extracellular" evidence="1">
    <location>
        <begin position="198"/>
        <end position="223"/>
    </location>
</feature>
<feature type="transmembrane region" description="Helical; Name=3" evidence="1">
    <location>
        <begin position="224"/>
        <end position="247"/>
    </location>
</feature>
<feature type="topological domain" description="Cytoplasmic" evidence="1">
    <location>
        <begin position="248"/>
        <end position="261"/>
    </location>
</feature>
<feature type="transmembrane region" description="Helical; Name=4" evidence="1">
    <location>
        <begin position="262"/>
        <end position="283"/>
    </location>
</feature>
<feature type="topological domain" description="Extracellular" evidence="1">
    <location>
        <begin position="284"/>
        <end position="301"/>
    </location>
</feature>
<feature type="transmembrane region" description="Helical; Name=5" evidence="1">
    <location>
        <begin position="302"/>
        <end position="324"/>
    </location>
</feature>
<feature type="topological domain" description="Cytoplasmic" evidence="1">
    <location>
        <begin position="325"/>
        <end position="348"/>
    </location>
</feature>
<feature type="transmembrane region" description="Helical; Name=6" evidence="1">
    <location>
        <begin position="349"/>
        <end position="367"/>
    </location>
</feature>
<feature type="topological domain" description="Extracellular" evidence="1">
    <location>
        <begin position="368"/>
        <end position="379"/>
    </location>
</feature>
<feature type="transmembrane region" description="Helical; Name=7" evidence="1">
    <location>
        <begin position="380"/>
        <end position="400"/>
    </location>
</feature>
<feature type="topological domain" description="Cytoplasmic" evidence="1">
    <location>
        <begin position="401"/>
        <end position="512"/>
    </location>
</feature>
<feature type="region of interest" description="Disordered" evidence="3">
    <location>
        <begin position="458"/>
        <end position="494"/>
    </location>
</feature>
<feature type="glycosylation site" description="N-linked (GlcNAc...) asparagine" evidence="2">
    <location>
        <position position="73"/>
    </location>
</feature>
<feature type="disulfide bond" evidence="1">
    <location>
        <begin position="43"/>
        <end position="65"/>
    </location>
</feature>
<feature type="disulfide bond" evidence="1">
    <location>
        <begin position="56"/>
        <end position="97"/>
    </location>
</feature>
<feature type="disulfide bond" evidence="1">
    <location>
        <begin position="78"/>
        <end position="119"/>
    </location>
</feature>
<feature type="sequence conflict" description="In Ref. 1; AAT46060." evidence="4" ref="1">
    <original>P</original>
    <variation>H</variation>
    <location>
        <position position="263"/>
    </location>
</feature>
<feature type="sequence conflict" description="In Ref. 1; AAT46060." evidence="4" ref="1">
    <original>GV</original>
    <variation>AF</variation>
    <location>
        <begin position="459"/>
        <end position="460"/>
    </location>
</feature>
<feature type="sequence conflict" description="In Ref. 1; AAT46060." evidence="4" ref="1">
    <original>R</original>
    <variation>L</variation>
    <location>
        <position position="485"/>
    </location>
</feature>
<evidence type="ECO:0000250" key="1"/>
<evidence type="ECO:0000255" key="2"/>
<evidence type="ECO:0000256" key="3">
    <source>
        <dbReference type="SAM" id="MobiDB-lite"/>
    </source>
</evidence>
<evidence type="ECO:0000305" key="4"/>
<comment type="function">
    <text evidence="1">This is a receptor for glucagon-like peptide 2. The activity of this receptor is mediated by G proteins which activate adenylyl cyclase (By similarity).</text>
</comment>
<comment type="subcellular location">
    <subcellularLocation>
        <location>Cell membrane</location>
        <topology>Multi-pass membrane protein</topology>
    </subcellularLocation>
</comment>
<comment type="similarity">
    <text evidence="4">Belongs to the G-protein coupled receptor 2 family.</text>
</comment>
<name>GLP2R_MOUSE</name>
<accession>Q5IXF8</accession>
<accession>Q5SU65</accession>
<organism>
    <name type="scientific">Mus musculus</name>
    <name type="common">Mouse</name>
    <dbReference type="NCBI Taxonomy" id="10090"/>
    <lineage>
        <taxon>Eukaryota</taxon>
        <taxon>Metazoa</taxon>
        <taxon>Chordata</taxon>
        <taxon>Craniata</taxon>
        <taxon>Vertebrata</taxon>
        <taxon>Euteleostomi</taxon>
        <taxon>Mammalia</taxon>
        <taxon>Eutheria</taxon>
        <taxon>Euarchontoglires</taxon>
        <taxon>Glires</taxon>
        <taxon>Rodentia</taxon>
        <taxon>Myomorpha</taxon>
        <taxon>Muroidea</taxon>
        <taxon>Muridae</taxon>
        <taxon>Murinae</taxon>
        <taxon>Mus</taxon>
        <taxon>Mus</taxon>
    </lineage>
</organism>
<protein>
    <recommendedName>
        <fullName>Glucagon-like peptide 2 receptor</fullName>
        <shortName>GLP-2 receptor</shortName>
        <shortName>GLP-2-R</shortName>
        <shortName>GLP-2R</shortName>
    </recommendedName>
</protein>
<reference key="1">
    <citation type="submission" date="2004-04" db="EMBL/GenBank/DDBJ databases">
        <title>Murine glucagon-like peptide-2 receptor cDNA.</title>
        <authorList>
            <person name="Estall J.L."/>
            <person name="Drucker D.J."/>
        </authorList>
    </citation>
    <scope>NUCLEOTIDE SEQUENCE [MRNA]</scope>
    <source>
        <strain>C57BL/6J</strain>
        <tissue>Jejunum</tissue>
    </source>
</reference>
<reference key="2">
    <citation type="journal article" date="2009" name="PLoS Biol.">
        <title>Lineage-specific biology revealed by a finished genome assembly of the mouse.</title>
        <authorList>
            <person name="Church D.M."/>
            <person name="Goodstadt L."/>
            <person name="Hillier L.W."/>
            <person name="Zody M.C."/>
            <person name="Goldstein S."/>
            <person name="She X."/>
            <person name="Bult C.J."/>
            <person name="Agarwala R."/>
            <person name="Cherry J.L."/>
            <person name="DiCuccio M."/>
            <person name="Hlavina W."/>
            <person name="Kapustin Y."/>
            <person name="Meric P."/>
            <person name="Maglott D."/>
            <person name="Birtle Z."/>
            <person name="Marques A.C."/>
            <person name="Graves T."/>
            <person name="Zhou S."/>
            <person name="Teague B."/>
            <person name="Potamousis K."/>
            <person name="Churas C."/>
            <person name="Place M."/>
            <person name="Herschleb J."/>
            <person name="Runnheim R."/>
            <person name="Forrest D."/>
            <person name="Amos-Landgraf J."/>
            <person name="Schwartz D.C."/>
            <person name="Cheng Z."/>
            <person name="Lindblad-Toh K."/>
            <person name="Eichler E.E."/>
            <person name="Ponting C.P."/>
        </authorList>
    </citation>
    <scope>NUCLEOTIDE SEQUENCE [LARGE SCALE GENOMIC DNA]</scope>
    <source>
        <strain>C57BL/6J</strain>
    </source>
</reference>